<gene>
    <name type="primary">xlnA</name>
    <name type="synonym">xynf11a</name>
    <name type="ORF">AFUA_3G00320</name>
</gene>
<keyword id="KW-0119">Carbohydrate metabolism</keyword>
<keyword id="KW-0325">Glycoprotein</keyword>
<keyword id="KW-0326">Glycosidase</keyword>
<keyword id="KW-0378">Hydrolase</keyword>
<keyword id="KW-0624">Polysaccharide degradation</keyword>
<keyword id="KW-1185">Reference proteome</keyword>
<keyword id="KW-0964">Secreted</keyword>
<keyword id="KW-0732">Signal</keyword>
<keyword id="KW-0858">Xylan degradation</keyword>
<accession>Q4WG11</accession>
<protein>
    <recommendedName>
        <fullName>Endo-1,4-beta-xylanase xynf11a</fullName>
        <shortName>Xylanase xynf11a</shortName>
        <ecNumber>3.2.1.8</ecNumber>
    </recommendedName>
    <alternativeName>
        <fullName>1,4-beta-D-xylan xylanohydrolase xynf11a</fullName>
    </alternativeName>
</protein>
<feature type="signal peptide" evidence="2">
    <location>
        <begin position="1"/>
        <end position="18"/>
    </location>
</feature>
<feature type="chain" id="PRO_0000393161" description="Endo-1,4-beta-xylanase xynf11a">
    <location>
        <begin position="19"/>
        <end position="228"/>
    </location>
</feature>
<feature type="domain" description="GH11" evidence="3">
    <location>
        <begin position="40"/>
        <end position="228"/>
    </location>
</feature>
<feature type="active site" description="Nucleophile" evidence="4">
    <location>
        <position position="124"/>
    </location>
</feature>
<feature type="active site" description="Proton donor" evidence="5">
    <location>
        <position position="215"/>
    </location>
</feature>
<feature type="glycosylation site" description="N-linked (GlcNAc...) asparagine" evidence="2">
    <location>
        <position position="29"/>
    </location>
</feature>
<comment type="function">
    <text evidence="6">Endo-1,4-beta-xylanase involved in the hydrolysis of xylan, a major structural heterogeneous polysaccharide found in plant biomass representing the second most abundant polysaccharide in the biosphere, after cellulose.</text>
</comment>
<comment type="catalytic activity">
    <reaction>
        <text>Endohydrolysis of (1-&gt;4)-beta-D-xylosidic linkages in xylans.</text>
        <dbReference type="EC" id="3.2.1.8"/>
    </reaction>
</comment>
<comment type="biophysicochemical properties">
    <phDependence>
        <text evidence="6">Optimum pH is 6.0. Stable in the pH range from 4.0 to 8.0.</text>
    </phDependence>
    <temperatureDependence>
        <text evidence="6">Optimum temperature is 60 degrees Celsius. Around 53 percent activity is retained at 70 degrees Celsius. Stable from 30 to 60 degrees Celsius with maximum stability at 30 degrees Celsius.</text>
    </temperatureDependence>
</comment>
<comment type="pathway">
    <text>Glycan degradation; xylan degradation.</text>
</comment>
<comment type="subcellular location">
    <subcellularLocation>
        <location evidence="1">Secreted</location>
    </subcellularLocation>
</comment>
<comment type="similarity">
    <text evidence="7">Belongs to the glycosyl hydrolase 11 (cellulase G) family.</text>
</comment>
<organism>
    <name type="scientific">Aspergillus fumigatus (strain ATCC MYA-4609 / CBS 101355 / FGSC A1100 / Af293)</name>
    <name type="common">Neosartorya fumigata</name>
    <dbReference type="NCBI Taxonomy" id="330879"/>
    <lineage>
        <taxon>Eukaryota</taxon>
        <taxon>Fungi</taxon>
        <taxon>Dikarya</taxon>
        <taxon>Ascomycota</taxon>
        <taxon>Pezizomycotina</taxon>
        <taxon>Eurotiomycetes</taxon>
        <taxon>Eurotiomycetidae</taxon>
        <taxon>Eurotiales</taxon>
        <taxon>Aspergillaceae</taxon>
        <taxon>Aspergillus</taxon>
        <taxon>Aspergillus subgen. Fumigati</taxon>
    </lineage>
</organism>
<reference key="1">
    <citation type="submission" date="2005-08" db="EMBL/GenBank/DDBJ databases">
        <title>Characterization of recombinant xylan degrading enzymes from Aspergillus fumigatus isolate SL1.</title>
        <authorList>
            <person name="Dabrowski S."/>
            <person name="Ahring B.K."/>
        </authorList>
    </citation>
    <scope>NUCLEOTIDE SEQUENCE [MRNA]</scope>
    <source>
        <strain>SL1</strain>
    </source>
</reference>
<reference key="2">
    <citation type="journal article" date="2009" name="J. Biosci. Bioeng.">
        <title>Cloning and expression of GH11 xylanase gene from Aspergillus fumigatus MKU1 in Pichia pastoris.</title>
        <authorList>
            <person name="Jeya M."/>
            <person name="Thiagarajan S."/>
            <person name="Lee J.K."/>
            <person name="Gunasekaran P."/>
        </authorList>
    </citation>
    <scope>NUCLEOTIDE SEQUENCE [GENOMIC DNA]</scope>
    <scope>FUNCTION</scope>
    <scope>BIOPHYSICOCHEMICAL PROPERTIES</scope>
    <source>
        <strain>MKU1</strain>
    </source>
</reference>
<reference key="3">
    <citation type="journal article" date="2005" name="Nature">
        <title>Genomic sequence of the pathogenic and allergenic filamentous fungus Aspergillus fumigatus.</title>
        <authorList>
            <person name="Nierman W.C."/>
            <person name="Pain A."/>
            <person name="Anderson M.J."/>
            <person name="Wortman J.R."/>
            <person name="Kim H.S."/>
            <person name="Arroyo J."/>
            <person name="Berriman M."/>
            <person name="Abe K."/>
            <person name="Archer D.B."/>
            <person name="Bermejo C."/>
            <person name="Bennett J.W."/>
            <person name="Bowyer P."/>
            <person name="Chen D."/>
            <person name="Collins M."/>
            <person name="Coulsen R."/>
            <person name="Davies R."/>
            <person name="Dyer P.S."/>
            <person name="Farman M.L."/>
            <person name="Fedorova N."/>
            <person name="Fedorova N.D."/>
            <person name="Feldblyum T.V."/>
            <person name="Fischer R."/>
            <person name="Fosker N."/>
            <person name="Fraser A."/>
            <person name="Garcia J.L."/>
            <person name="Garcia M.J."/>
            <person name="Goble A."/>
            <person name="Goldman G.H."/>
            <person name="Gomi K."/>
            <person name="Griffith-Jones S."/>
            <person name="Gwilliam R."/>
            <person name="Haas B.J."/>
            <person name="Haas H."/>
            <person name="Harris D.E."/>
            <person name="Horiuchi H."/>
            <person name="Huang J."/>
            <person name="Humphray S."/>
            <person name="Jimenez J."/>
            <person name="Keller N."/>
            <person name="Khouri H."/>
            <person name="Kitamoto K."/>
            <person name="Kobayashi T."/>
            <person name="Konzack S."/>
            <person name="Kulkarni R."/>
            <person name="Kumagai T."/>
            <person name="Lafton A."/>
            <person name="Latge J.-P."/>
            <person name="Li W."/>
            <person name="Lord A."/>
            <person name="Lu C."/>
            <person name="Majoros W.H."/>
            <person name="May G.S."/>
            <person name="Miller B.L."/>
            <person name="Mohamoud Y."/>
            <person name="Molina M."/>
            <person name="Monod M."/>
            <person name="Mouyna I."/>
            <person name="Mulligan S."/>
            <person name="Murphy L.D."/>
            <person name="O'Neil S."/>
            <person name="Paulsen I."/>
            <person name="Penalva M.A."/>
            <person name="Pertea M."/>
            <person name="Price C."/>
            <person name="Pritchard B.L."/>
            <person name="Quail M.A."/>
            <person name="Rabbinowitsch E."/>
            <person name="Rawlins N."/>
            <person name="Rajandream M.A."/>
            <person name="Reichard U."/>
            <person name="Renauld H."/>
            <person name="Robson G.D."/>
            <person name="Rodriguez de Cordoba S."/>
            <person name="Rodriguez-Pena J.M."/>
            <person name="Ronning C.M."/>
            <person name="Rutter S."/>
            <person name="Salzberg S.L."/>
            <person name="Sanchez M."/>
            <person name="Sanchez-Ferrero J.C."/>
            <person name="Saunders D."/>
            <person name="Seeger K."/>
            <person name="Squares R."/>
            <person name="Squares S."/>
            <person name="Takeuchi M."/>
            <person name="Tekaia F."/>
            <person name="Turner G."/>
            <person name="Vazquez de Aldana C.R."/>
            <person name="Weidman J."/>
            <person name="White O."/>
            <person name="Woodward J.R."/>
            <person name="Yu J.-H."/>
            <person name="Fraser C.M."/>
            <person name="Galagan J.E."/>
            <person name="Asai K."/>
            <person name="Machida M."/>
            <person name="Hall N."/>
            <person name="Barrell B.G."/>
            <person name="Denning D.W."/>
        </authorList>
    </citation>
    <scope>NUCLEOTIDE SEQUENCE [LARGE SCALE GENOMIC DNA]</scope>
    <source>
        <strain>ATCC MYA-4609 / CBS 101355 / FGSC A1100 / Af293</strain>
    </source>
</reference>
<proteinExistence type="evidence at protein level"/>
<dbReference type="EC" id="3.2.1.8"/>
<dbReference type="EMBL" id="DQ156553">
    <property type="protein sequence ID" value="ABA40419.1"/>
    <property type="molecule type" value="mRNA"/>
</dbReference>
<dbReference type="EMBL" id="EF375873">
    <property type="protein sequence ID" value="ABN48478.1"/>
    <property type="molecule type" value="Genomic_DNA"/>
</dbReference>
<dbReference type="EMBL" id="AAHF01000010">
    <property type="protein sequence ID" value="EAL86316.1"/>
    <property type="molecule type" value="Genomic_DNA"/>
</dbReference>
<dbReference type="RefSeq" id="XP_748354.1">
    <property type="nucleotide sequence ID" value="XM_743261.1"/>
</dbReference>
<dbReference type="SMR" id="Q4WG11"/>
<dbReference type="STRING" id="330879.Q4WG11"/>
<dbReference type="CAZy" id="GH11">
    <property type="family name" value="Glycoside Hydrolase Family 11"/>
</dbReference>
<dbReference type="GlyCosmos" id="Q4WG11">
    <property type="glycosylation" value="1 site, No reported glycans"/>
</dbReference>
<dbReference type="EnsemblFungi" id="EAL86316">
    <property type="protein sequence ID" value="EAL86316"/>
    <property type="gene ID" value="AFUA_3G00320"/>
</dbReference>
<dbReference type="GeneID" id="3505821"/>
<dbReference type="KEGG" id="afm:AFUA_3G00320"/>
<dbReference type="VEuPathDB" id="FungiDB:Afu3g00320"/>
<dbReference type="eggNOG" id="ENOG502RXA7">
    <property type="taxonomic scope" value="Eukaryota"/>
</dbReference>
<dbReference type="HOGENOM" id="CLU_052631_0_0_1"/>
<dbReference type="InParanoid" id="Q4WG11"/>
<dbReference type="OMA" id="NMQNHFN"/>
<dbReference type="OrthoDB" id="2115822at2759"/>
<dbReference type="UniPathway" id="UPA00114"/>
<dbReference type="Proteomes" id="UP000002530">
    <property type="component" value="Chromosome 3"/>
</dbReference>
<dbReference type="GO" id="GO:0005576">
    <property type="term" value="C:extracellular region"/>
    <property type="evidence" value="ECO:0007669"/>
    <property type="project" value="UniProtKB-SubCell"/>
</dbReference>
<dbReference type="GO" id="GO:0031176">
    <property type="term" value="F:endo-1,4-beta-xylanase activity"/>
    <property type="evidence" value="ECO:0000314"/>
    <property type="project" value="UniProtKB"/>
</dbReference>
<dbReference type="GO" id="GO:0045493">
    <property type="term" value="P:xylan catabolic process"/>
    <property type="evidence" value="ECO:0000314"/>
    <property type="project" value="UniProtKB"/>
</dbReference>
<dbReference type="FunFam" id="2.60.120.180:FF:000001">
    <property type="entry name" value="Endo-1,4-beta-xylanase"/>
    <property type="match status" value="1"/>
</dbReference>
<dbReference type="Gene3D" id="2.60.120.180">
    <property type="match status" value="1"/>
</dbReference>
<dbReference type="InterPro" id="IPR013320">
    <property type="entry name" value="ConA-like_dom_sf"/>
</dbReference>
<dbReference type="InterPro" id="IPR013319">
    <property type="entry name" value="GH11/12"/>
</dbReference>
<dbReference type="InterPro" id="IPR018208">
    <property type="entry name" value="GH11_AS_1"/>
</dbReference>
<dbReference type="InterPro" id="IPR033119">
    <property type="entry name" value="GH11_AS_2"/>
</dbReference>
<dbReference type="InterPro" id="IPR033123">
    <property type="entry name" value="GH11_dom"/>
</dbReference>
<dbReference type="InterPro" id="IPR001137">
    <property type="entry name" value="Glyco_hydro_11"/>
</dbReference>
<dbReference type="PANTHER" id="PTHR46828">
    <property type="entry name" value="ENDO-1,4-BETA-XYLANASE A-RELATED"/>
    <property type="match status" value="1"/>
</dbReference>
<dbReference type="PANTHER" id="PTHR46828:SF2">
    <property type="entry name" value="ENDO-1,4-BETA-XYLANASE A-RELATED"/>
    <property type="match status" value="1"/>
</dbReference>
<dbReference type="Pfam" id="PF00457">
    <property type="entry name" value="Glyco_hydro_11"/>
    <property type="match status" value="1"/>
</dbReference>
<dbReference type="PRINTS" id="PR00911">
    <property type="entry name" value="GLHYDRLASE11"/>
</dbReference>
<dbReference type="SUPFAM" id="SSF49899">
    <property type="entry name" value="Concanavalin A-like lectins/glucanases"/>
    <property type="match status" value="1"/>
</dbReference>
<dbReference type="PROSITE" id="PS00776">
    <property type="entry name" value="GH11_1"/>
    <property type="match status" value="1"/>
</dbReference>
<dbReference type="PROSITE" id="PS00777">
    <property type="entry name" value="GH11_2"/>
    <property type="match status" value="1"/>
</dbReference>
<dbReference type="PROSITE" id="PS51761">
    <property type="entry name" value="GH11_3"/>
    <property type="match status" value="1"/>
</dbReference>
<evidence type="ECO:0000250" key="1"/>
<evidence type="ECO:0000255" key="2"/>
<evidence type="ECO:0000255" key="3">
    <source>
        <dbReference type="PROSITE-ProRule" id="PRU01097"/>
    </source>
</evidence>
<evidence type="ECO:0000255" key="4">
    <source>
        <dbReference type="PROSITE-ProRule" id="PRU10062"/>
    </source>
</evidence>
<evidence type="ECO:0000255" key="5">
    <source>
        <dbReference type="PROSITE-ProRule" id="PRU10063"/>
    </source>
</evidence>
<evidence type="ECO:0000269" key="6">
    <source>
    </source>
</evidence>
<evidence type="ECO:0000305" key="7"/>
<sequence length="228" mass="24494">MVSFSYLLLACSAIGALAAPVEPETTSFNETALHEFAERAGTPSSTGWNNGYYYSFWTDGGGDVTYTNGAGGSYSVNWRNVGNFVGGKGWNPGSARTINYGGSFNPSGNGYLAVYGWTTNPLIEYYVVESYGTYNPGSGGTFRGTVNTDGGTYNIYTAVRYNAPSIEGTKTFTQYWSVRTSKRTGGTVTMANHFNAWSRLGMNLGTHNYQIVATEGYQSSGSASITVY</sequence>
<name>XYNA_ASPFU</name>